<name>DHCR7_MOUSE</name>
<gene>
    <name type="primary">Dhcr7</name>
</gene>
<comment type="function">
    <text evidence="5 6">Oxidoreductase that catalyzes the last step of the cholesterol synthesis pathway, which transforms cholesta-5,7-dien-3beta-ol (7-dehydrocholesterol,7-DHC) into cholesterol by reducing the C7-C8 double bond of its sterol core (PubMed:11230174, PubMed:38297130). Can also metabolize cholesta-5,7,24-trien-3beta-ol (7-dehydrodemosterol, 7-DHD) to desmosterol, which is then metabolized by the Delta(24)-sterol reductase (DHCR24) to cholesterol (PubMed:11230174). Modulates ferroptosis (a form of regulated cell death driven by iron-dependent lipid peroxidation) through the metabolic breakdown of the anti-ferroptotic metabolites 7-DHC and 7-DHD which, when accumulated, divert the propagation of peroxyl radical-mediated damage from phospholipid components to its sterol core, protecting plasma and mitochondrial membranes from phospholipid autoxidation (PubMed:38297130).</text>
</comment>
<comment type="function">
    <text evidence="2">Component of the microsomal antiestrogen binding site (AEBS), a multiproteic complex at the ER membrane that consists of an association between cholestenol Delta-isomerase/EBP and DHCR7. This complex is responsible for cholesterol-5,6-epoxide hydrolase (ChEH) activity, which consists in the hydration of cholesterol-5,6-epoxides (5,6-EC) into cholestane-3beta,5alpha,6beta-triol (CT). The precise role of each component of this complex has not been described yet.</text>
</comment>
<comment type="catalytic activity">
    <reaction evidence="6 8">
        <text>cholesterol + NADP(+) = 7-dehydrocholesterol + NADPH + H(+)</text>
        <dbReference type="Rhea" id="RHEA:23984"/>
        <dbReference type="ChEBI" id="CHEBI:15378"/>
        <dbReference type="ChEBI" id="CHEBI:16113"/>
        <dbReference type="ChEBI" id="CHEBI:17759"/>
        <dbReference type="ChEBI" id="CHEBI:57783"/>
        <dbReference type="ChEBI" id="CHEBI:58349"/>
        <dbReference type="EC" id="1.3.1.21"/>
    </reaction>
    <physiologicalReaction direction="right-to-left" evidence="6 8">
        <dbReference type="Rhea" id="RHEA:23986"/>
    </physiologicalReaction>
</comment>
<comment type="catalytic activity">
    <reaction evidence="5">
        <text>7-dehydrodesmosterol + NADPH + H(+) = desmosterol + NADP(+)</text>
        <dbReference type="Rhea" id="RHEA:46740"/>
        <dbReference type="ChEBI" id="CHEBI:15378"/>
        <dbReference type="ChEBI" id="CHEBI:17737"/>
        <dbReference type="ChEBI" id="CHEBI:27910"/>
        <dbReference type="ChEBI" id="CHEBI:57783"/>
        <dbReference type="ChEBI" id="CHEBI:58349"/>
    </reaction>
    <physiologicalReaction direction="left-to-right" evidence="8">
        <dbReference type="Rhea" id="RHEA:46741"/>
    </physiologicalReaction>
</comment>
<comment type="catalytic activity">
    <reaction evidence="2">
        <text>5,6alpha-epoxy-5alpha-cholestan-3beta-ol + H2O = 5alpha-cholestane-3beta,5,6beta-triol</text>
        <dbReference type="Rhea" id="RHEA:11964"/>
        <dbReference type="ChEBI" id="CHEBI:15377"/>
        <dbReference type="ChEBI" id="CHEBI:28082"/>
        <dbReference type="ChEBI" id="CHEBI:49305"/>
        <dbReference type="EC" id="3.3.2.11"/>
    </reaction>
    <physiologicalReaction direction="left-to-right" evidence="2">
        <dbReference type="Rhea" id="RHEA:11965"/>
    </physiologicalReaction>
</comment>
<comment type="catalytic activity">
    <reaction evidence="2">
        <text>5,6beta-epoxy-5beta-cholestan-3beta-ol + H2O = 5alpha-cholestane-3beta,5,6beta-triol</text>
        <dbReference type="Rhea" id="RHEA:15113"/>
        <dbReference type="ChEBI" id="CHEBI:15377"/>
        <dbReference type="ChEBI" id="CHEBI:28082"/>
        <dbReference type="ChEBI" id="CHEBI:28164"/>
        <dbReference type="EC" id="3.3.2.11"/>
    </reaction>
    <physiologicalReaction direction="left-to-right" evidence="2">
        <dbReference type="Rhea" id="RHEA:15114"/>
    </physiologicalReaction>
</comment>
<comment type="pathway">
    <text evidence="5">Steroid biosynthesis; cholesterol biosynthesis.</text>
</comment>
<comment type="subunit">
    <text evidence="2">Interacts with DHCR24; this interaction regulates DHCR7 activity. Interacts with TMEM147.</text>
</comment>
<comment type="subcellular location">
    <subcellularLocation>
        <location evidence="2">Endoplasmic reticulum membrane</location>
        <topology evidence="3">Multi-pass membrane protein</topology>
    </subcellularLocation>
</comment>
<comment type="disruption phenotype">
    <text evidence="5">Deficient mice die within one day of birth due to respiratory and suckling problems. They exhibit abnormal cholesterol homeostasis with reduced tissue cholesterol levels and total sterol levels, enlarged bladders and sometimes cleft palate.</text>
</comment>
<comment type="similarity">
    <text evidence="7">Belongs to the ERG4/ERG24 family.</text>
</comment>
<protein>
    <recommendedName>
        <fullName evidence="2">7-dehydrocholesterol reductase</fullName>
        <shortName>7-DHC reductase</shortName>
        <ecNumber evidence="5">1.3.1.21</ecNumber>
    </recommendedName>
    <alternativeName>
        <fullName evidence="2">Cholesterol-5,6-epoxide hydrolase subunit DHCR7</fullName>
        <ecNumber evidence="2">3.3.2.11</ecNumber>
    </alternativeName>
    <alternativeName>
        <fullName>Sterol Delta(7)-reductase</fullName>
    </alternativeName>
</protein>
<sequence>MASKSQHNAPKVKSPNGKAGSQGQWGRAWEVDWFSLASIIFLLLFAPFIVYYFIMACDQYSCSLTAPALDIATGHASLADIWAKTPPVTAKAAQLYALWVSFQVLLYSWLPDFCHRFLPGYVGGVQEGAITPAGVVNKYEVNGLQAWLITHILWFVNAYLLSWFSPTIIFDNWIPLLWCANILGYAVSTFAMIKGYLFPTSAEDCKFTGNFFYNYMMGIEFNPRIGKWFDFKLFFNGRPGIVAWTLINLSFAAKQQELYGHVTNSMILVNVLQAIYVLDFFWNETWYLKTIDICHDHFGWYLGWGDCVWLPYLYTLQGLYLVYHPVQLSTPNALGILLLGLVGYYIFRMTNHQKDLFRRTDGRCLIWGKKPKAIECSYTSADGLKHHSKLLVSGFWGVARHFNYTGDLMGSLAYCLACGGGHLLPYFYIIYMTILLTHRCLRDEHRCANKYGRDWERYTAAVPYRLLPGIF</sequence>
<proteinExistence type="evidence at protein level"/>
<accession>O88455</accession>
<reference key="1">
    <citation type="journal article" date="1998" name="Proc. Natl. Acad. Sci. U.S.A.">
        <title>Mutations in the delta7-sterol reductase gene in patients with the Smith-Lemli-Opitz syndrome.</title>
        <authorList>
            <person name="Fitzky B.U."/>
            <person name="Witsch-Baumgartner M."/>
            <person name="Erdel M."/>
            <person name="Lee J.N."/>
            <person name="Paik Y.-K."/>
            <person name="Glossmann H."/>
            <person name="Utermann G."/>
            <person name="Moebius F.F."/>
        </authorList>
    </citation>
    <scope>NUCLEOTIDE SEQUENCE [MRNA]</scope>
    <source>
        <strain>C57BL/6J</strain>
    </source>
</reference>
<reference key="2">
    <citation type="journal article" date="2004" name="Genome Res.">
        <title>The status, quality, and expansion of the NIH full-length cDNA project: the Mammalian Gene Collection (MGC).</title>
        <authorList>
            <consortium name="The MGC Project Team"/>
        </authorList>
    </citation>
    <scope>NUCLEOTIDE SEQUENCE [LARGE SCALE MRNA]</scope>
</reference>
<reference key="3">
    <citation type="journal article" date="2001" name="Hum. Mol. Genet.">
        <title>Biochemical, phenotypic and neurophysiological characterization of a genetic mouse model of RSH/Smith--Lemli--Opitz syndrome.</title>
        <authorList>
            <person name="Wassif C.A."/>
            <person name="Zhu P."/>
            <person name="Kratz L."/>
            <person name="Krakowiak P.A."/>
            <person name="Battaile K.P."/>
            <person name="Weight F.F."/>
            <person name="Grinberg A."/>
            <person name="Steiner R.D."/>
            <person name="Nwokoro N.A."/>
            <person name="Kelley R.I."/>
            <person name="Stewart R.R."/>
            <person name="Porter F.D."/>
        </authorList>
    </citation>
    <scope>DISRUPTION PHENOTYPE</scope>
    <scope>FUNCTION</scope>
    <scope>CATALYTIC ACTIVITY</scope>
</reference>
<reference key="4">
    <citation type="journal article" date="2024" name="Nature">
        <title>7-Dehydrocholesterol dictates ferroptosis sensitivity.</title>
        <authorList>
            <person name="Li Y."/>
            <person name="Ran Q."/>
            <person name="Duan Q."/>
            <person name="Jin J."/>
            <person name="Wang Y."/>
            <person name="Yu L."/>
            <person name="Wang C."/>
            <person name="Zhu Z."/>
            <person name="Chen X."/>
            <person name="Weng L."/>
            <person name="Li Z."/>
            <person name="Wang J."/>
            <person name="Wu Q."/>
            <person name="Wang H."/>
            <person name="Tian H."/>
            <person name="Song S."/>
            <person name="Shan Z."/>
            <person name="Zhai Q."/>
            <person name="Qin H."/>
            <person name="Chen S."/>
            <person name="Fang L."/>
            <person name="Yin H."/>
            <person name="Zhou H."/>
            <person name="Jiang X."/>
            <person name="Wang P."/>
        </authorList>
    </citation>
    <scope>FUNCTION</scope>
    <scope>CATALYTIC ACTIVITY</scope>
</reference>
<reference key="5">
    <citation type="journal article" date="2010" name="Cell">
        <title>A tissue-specific atlas of mouse protein phosphorylation and expression.</title>
        <authorList>
            <person name="Huttlin E.L."/>
            <person name="Jedrychowski M.P."/>
            <person name="Elias J.E."/>
            <person name="Goswami T."/>
            <person name="Rad R."/>
            <person name="Beausoleil S.A."/>
            <person name="Villen J."/>
            <person name="Haas W."/>
            <person name="Sowa M.E."/>
            <person name="Gygi S.P."/>
        </authorList>
    </citation>
    <scope>IDENTIFICATION BY MASS SPECTROMETRY [LARGE SCALE ANALYSIS]</scope>
    <source>
        <tissue>Brain</tissue>
        <tissue>Brown adipose tissue</tissue>
        <tissue>Kidney</tissue>
        <tissue>Liver</tissue>
        <tissue>Lung</tissue>
        <tissue>Pancreas</tissue>
        <tissue>Spleen</tissue>
        <tissue>Testis</tissue>
    </source>
</reference>
<feature type="chain" id="PRO_0000207503" description="7-dehydrocholesterol reductase">
    <location>
        <begin position="1"/>
        <end position="471"/>
    </location>
</feature>
<feature type="transmembrane region" description="Helical" evidence="3">
    <location>
        <begin position="36"/>
        <end position="56"/>
    </location>
</feature>
<feature type="transmembrane region" description="Helical" evidence="3">
    <location>
        <begin position="95"/>
        <end position="115"/>
    </location>
</feature>
<feature type="transmembrane region" description="Helical" evidence="3">
    <location>
        <begin position="144"/>
        <end position="164"/>
    </location>
</feature>
<feature type="transmembrane region" description="Helical" evidence="3">
    <location>
        <begin position="173"/>
        <end position="193"/>
    </location>
</feature>
<feature type="transmembrane region" description="Helical" evidence="3">
    <location>
        <begin position="233"/>
        <end position="253"/>
    </location>
</feature>
<feature type="transmembrane region" description="Helical" evidence="3">
    <location>
        <begin position="262"/>
        <end position="282"/>
    </location>
</feature>
<feature type="transmembrane region" description="Helical" evidence="3">
    <location>
        <begin position="302"/>
        <end position="322"/>
    </location>
</feature>
<feature type="transmembrane region" description="Helical" evidence="3">
    <location>
        <begin position="327"/>
        <end position="347"/>
    </location>
</feature>
<feature type="transmembrane region" description="Helical" evidence="3">
    <location>
        <begin position="416"/>
        <end position="436"/>
    </location>
</feature>
<feature type="region of interest" description="Disordered" evidence="4">
    <location>
        <begin position="1"/>
        <end position="23"/>
    </location>
</feature>
<feature type="binding site" evidence="1">
    <location>
        <position position="354"/>
    </location>
    <ligand>
        <name>NADP(+)</name>
        <dbReference type="ChEBI" id="CHEBI:58349"/>
    </ligand>
</feature>
<feature type="binding site" evidence="1">
    <location>
        <position position="358"/>
    </location>
    <ligand>
        <name>NADP(+)</name>
        <dbReference type="ChEBI" id="CHEBI:58349"/>
    </ligand>
</feature>
<feature type="binding site" evidence="1">
    <location>
        <position position="391"/>
    </location>
    <ligand>
        <name>NADP(+)</name>
        <dbReference type="ChEBI" id="CHEBI:58349"/>
    </ligand>
</feature>
<feature type="binding site" evidence="1">
    <location>
        <position position="396"/>
    </location>
    <ligand>
        <name>NADP(+)</name>
        <dbReference type="ChEBI" id="CHEBI:58349"/>
    </ligand>
</feature>
<feature type="binding site" evidence="1">
    <location>
        <begin position="403"/>
        <end position="404"/>
    </location>
    <ligand>
        <name>NADP(+)</name>
        <dbReference type="ChEBI" id="CHEBI:58349"/>
    </ligand>
</feature>
<feature type="binding site" evidence="1">
    <location>
        <position position="443"/>
    </location>
    <ligand>
        <name>NADP(+)</name>
        <dbReference type="ChEBI" id="CHEBI:58349"/>
    </ligand>
</feature>
<feature type="binding site" evidence="1">
    <location>
        <begin position="447"/>
        <end position="451"/>
    </location>
    <ligand>
        <name>NADP(+)</name>
        <dbReference type="ChEBI" id="CHEBI:58349"/>
    </ligand>
</feature>
<feature type="binding site" evidence="1">
    <location>
        <position position="458"/>
    </location>
    <ligand>
        <name>NADP(+)</name>
        <dbReference type="ChEBI" id="CHEBI:58349"/>
    </ligand>
</feature>
<feature type="modified residue" description="Phosphoserine" evidence="2">
    <location>
        <position position="14"/>
    </location>
</feature>
<evidence type="ECO:0000250" key="1">
    <source>
        <dbReference type="UniProtKB" id="G4SW86"/>
    </source>
</evidence>
<evidence type="ECO:0000250" key="2">
    <source>
        <dbReference type="UniProtKB" id="Q9UBM7"/>
    </source>
</evidence>
<evidence type="ECO:0000255" key="3"/>
<evidence type="ECO:0000256" key="4">
    <source>
        <dbReference type="SAM" id="MobiDB-lite"/>
    </source>
</evidence>
<evidence type="ECO:0000269" key="5">
    <source>
    </source>
</evidence>
<evidence type="ECO:0000269" key="6">
    <source>
    </source>
</evidence>
<evidence type="ECO:0000305" key="7"/>
<evidence type="ECO:0000305" key="8">
    <source>
    </source>
</evidence>
<dbReference type="EC" id="1.3.1.21" evidence="5"/>
<dbReference type="EC" id="3.3.2.11" evidence="2"/>
<dbReference type="EMBL" id="AF057368">
    <property type="protein sequence ID" value="AAC40164.1"/>
    <property type="molecule type" value="mRNA"/>
</dbReference>
<dbReference type="EMBL" id="BC006854">
    <property type="protein sequence ID" value="AAH06854.1"/>
    <property type="molecule type" value="mRNA"/>
</dbReference>
<dbReference type="CCDS" id="CCDS22048.1"/>
<dbReference type="RefSeq" id="NP_001369427.1">
    <property type="nucleotide sequence ID" value="NM_001382498.2"/>
</dbReference>
<dbReference type="RefSeq" id="NP_001369432.1">
    <property type="nucleotide sequence ID" value="NM_001382503.1"/>
</dbReference>
<dbReference type="RefSeq" id="NP_001399246.1">
    <property type="nucleotide sequence ID" value="NM_001412317.1"/>
</dbReference>
<dbReference type="RefSeq" id="NP_001399247.1">
    <property type="nucleotide sequence ID" value="NM_001412318.1"/>
</dbReference>
<dbReference type="RefSeq" id="NP_001399248.1">
    <property type="nucleotide sequence ID" value="NM_001412319.1"/>
</dbReference>
<dbReference type="RefSeq" id="NP_031882.1">
    <property type="nucleotide sequence ID" value="NM_007856.2"/>
</dbReference>
<dbReference type="RefSeq" id="XP_006508541.1">
    <property type="nucleotide sequence ID" value="XM_006508478.1"/>
</dbReference>
<dbReference type="RefSeq" id="XP_006508542.1">
    <property type="nucleotide sequence ID" value="XM_006508479.3"/>
</dbReference>
<dbReference type="RefSeq" id="XP_006508543.1">
    <property type="nucleotide sequence ID" value="XM_006508480.2"/>
</dbReference>
<dbReference type="RefSeq" id="XP_006508544.1">
    <property type="nucleotide sequence ID" value="XM_006508481.2"/>
</dbReference>
<dbReference type="RefSeq" id="XP_036008526.1">
    <property type="nucleotide sequence ID" value="XM_036152633.1"/>
</dbReference>
<dbReference type="RefSeq" id="XP_036008529.1">
    <property type="nucleotide sequence ID" value="XM_036152636.1"/>
</dbReference>
<dbReference type="SMR" id="O88455"/>
<dbReference type="BioGRID" id="199217">
    <property type="interactions" value="93"/>
</dbReference>
<dbReference type="FunCoup" id="O88455">
    <property type="interactions" value="1306"/>
</dbReference>
<dbReference type="STRING" id="10090.ENSMUSP00000073541"/>
<dbReference type="SwissLipids" id="SLP:000001320"/>
<dbReference type="iPTMnet" id="O88455"/>
<dbReference type="PhosphoSitePlus" id="O88455"/>
<dbReference type="SwissPalm" id="O88455"/>
<dbReference type="jPOST" id="O88455"/>
<dbReference type="PaxDb" id="10090-ENSMUSP00000073541"/>
<dbReference type="PeptideAtlas" id="O88455"/>
<dbReference type="ProteomicsDB" id="277332"/>
<dbReference type="Pumba" id="O88455"/>
<dbReference type="TopDownProteomics" id="O88455"/>
<dbReference type="Antibodypedia" id="30720">
    <property type="antibodies" value="168 antibodies from 26 providers"/>
</dbReference>
<dbReference type="DNASU" id="13360"/>
<dbReference type="Ensembl" id="ENSMUST00000073878.12">
    <property type="protein sequence ID" value="ENSMUSP00000073541.6"/>
    <property type="gene ID" value="ENSMUSG00000058454.16"/>
</dbReference>
<dbReference type="Ensembl" id="ENSMUST00000124340.8">
    <property type="protein sequence ID" value="ENSMUSP00000117659.2"/>
    <property type="gene ID" value="ENSMUSG00000058454.16"/>
</dbReference>
<dbReference type="Ensembl" id="ENSMUST00000141916.8">
    <property type="protein sequence ID" value="ENSMUSP00000121782.2"/>
    <property type="gene ID" value="ENSMUSG00000058454.16"/>
</dbReference>
<dbReference type="GeneID" id="13360"/>
<dbReference type="KEGG" id="mmu:13360"/>
<dbReference type="UCSC" id="uc009kqc.1">
    <property type="organism name" value="mouse"/>
</dbReference>
<dbReference type="AGR" id="MGI:1298378"/>
<dbReference type="CTD" id="1717"/>
<dbReference type="MGI" id="MGI:1298378">
    <property type="gene designation" value="Dhcr7"/>
</dbReference>
<dbReference type="VEuPathDB" id="HostDB:ENSMUSG00000058454"/>
<dbReference type="eggNOG" id="KOG1435">
    <property type="taxonomic scope" value="Eukaryota"/>
</dbReference>
<dbReference type="GeneTree" id="ENSGT00390000000417"/>
<dbReference type="HOGENOM" id="CLU_015631_0_0_1"/>
<dbReference type="InParanoid" id="O88455"/>
<dbReference type="PhylomeDB" id="O88455"/>
<dbReference type="TreeFam" id="TF101180"/>
<dbReference type="BRENDA" id="1.3.1.21">
    <property type="organism ID" value="3474"/>
</dbReference>
<dbReference type="Reactome" id="R-MMU-6807047">
    <property type="pathway name" value="Cholesterol biosynthesis via desmosterol"/>
</dbReference>
<dbReference type="Reactome" id="R-MMU-6807062">
    <property type="pathway name" value="Cholesterol biosynthesis via lathosterol"/>
</dbReference>
<dbReference type="UniPathway" id="UPA00063"/>
<dbReference type="BioGRID-ORCS" id="13360">
    <property type="hits" value="3 hits in 81 CRISPR screens"/>
</dbReference>
<dbReference type="ChiTaRS" id="Dhcr7">
    <property type="organism name" value="mouse"/>
</dbReference>
<dbReference type="PRO" id="PR:O88455"/>
<dbReference type="Proteomes" id="UP000000589">
    <property type="component" value="Chromosome 7"/>
</dbReference>
<dbReference type="RNAct" id="O88455">
    <property type="molecule type" value="protein"/>
</dbReference>
<dbReference type="Bgee" id="ENSMUSG00000058454">
    <property type="expression patterns" value="Expressed in adrenal gland and 252 other cell types or tissues"/>
</dbReference>
<dbReference type="ExpressionAtlas" id="O88455">
    <property type="expression patterns" value="baseline and differential"/>
</dbReference>
<dbReference type="GO" id="GO:0005789">
    <property type="term" value="C:endoplasmic reticulum membrane"/>
    <property type="evidence" value="ECO:0007669"/>
    <property type="project" value="UniProtKB-SubCell"/>
</dbReference>
<dbReference type="GO" id="GO:0047598">
    <property type="term" value="F:7-dehydrocholesterol reductase activity"/>
    <property type="evidence" value="ECO:0000314"/>
    <property type="project" value="MGI"/>
</dbReference>
<dbReference type="GO" id="GO:0033963">
    <property type="term" value="F:cholesterol-5,6-oxide hydrolase activity"/>
    <property type="evidence" value="ECO:0000250"/>
    <property type="project" value="UniProtKB"/>
</dbReference>
<dbReference type="GO" id="GO:0050661">
    <property type="term" value="F:NADP binding"/>
    <property type="evidence" value="ECO:0000250"/>
    <property type="project" value="UniProtKB"/>
</dbReference>
<dbReference type="GO" id="GO:0001568">
    <property type="term" value="P:blood vessel development"/>
    <property type="evidence" value="ECO:0000315"/>
    <property type="project" value="MGI"/>
</dbReference>
<dbReference type="GO" id="GO:0006695">
    <property type="term" value="P:cholesterol biosynthetic process"/>
    <property type="evidence" value="ECO:0007669"/>
    <property type="project" value="UniProtKB-UniPathway"/>
</dbReference>
<dbReference type="GO" id="GO:0030324">
    <property type="term" value="P:lung development"/>
    <property type="evidence" value="ECO:0000315"/>
    <property type="project" value="MGI"/>
</dbReference>
<dbReference type="GO" id="GO:0060487">
    <property type="term" value="P:lung epithelial cell differentiation"/>
    <property type="evidence" value="ECO:0000315"/>
    <property type="project" value="MGI"/>
</dbReference>
<dbReference type="GO" id="GO:0035264">
    <property type="term" value="P:multicellular organism growth"/>
    <property type="evidence" value="ECO:0000315"/>
    <property type="project" value="MGI"/>
</dbReference>
<dbReference type="GO" id="GO:0009791">
    <property type="term" value="P:post-embryonic development"/>
    <property type="evidence" value="ECO:0000315"/>
    <property type="project" value="MGI"/>
</dbReference>
<dbReference type="GO" id="GO:0042127">
    <property type="term" value="P:regulation of cell population proliferation"/>
    <property type="evidence" value="ECO:0000315"/>
    <property type="project" value="MGI"/>
</dbReference>
<dbReference type="GO" id="GO:0016126">
    <property type="term" value="P:sterol biosynthetic process"/>
    <property type="evidence" value="ECO:0000315"/>
    <property type="project" value="MGI"/>
</dbReference>
<dbReference type="FunFam" id="1.20.120.1630:FF:000004">
    <property type="entry name" value="7-dehydrocholesterol reductase"/>
    <property type="match status" value="1"/>
</dbReference>
<dbReference type="Gene3D" id="1.20.120.1630">
    <property type="match status" value="1"/>
</dbReference>
<dbReference type="InterPro" id="IPR001171">
    <property type="entry name" value="ERG24_DHCR-like"/>
</dbReference>
<dbReference type="InterPro" id="IPR018083">
    <property type="entry name" value="Sterol_reductase_CS"/>
</dbReference>
<dbReference type="PANTHER" id="PTHR21257:SF38">
    <property type="entry name" value="7-DEHYDROCHOLESTEROL REDUCTASE"/>
    <property type="match status" value="1"/>
</dbReference>
<dbReference type="PANTHER" id="PTHR21257">
    <property type="entry name" value="DELTA(14)-STEROL REDUCTASE"/>
    <property type="match status" value="1"/>
</dbReference>
<dbReference type="Pfam" id="PF01222">
    <property type="entry name" value="ERG4_ERG24"/>
    <property type="match status" value="1"/>
</dbReference>
<dbReference type="PROSITE" id="PS01017">
    <property type="entry name" value="STEROL_REDUCT_1"/>
    <property type="match status" value="1"/>
</dbReference>
<dbReference type="PROSITE" id="PS01018">
    <property type="entry name" value="STEROL_REDUCT_2"/>
    <property type="match status" value="1"/>
</dbReference>
<organism>
    <name type="scientific">Mus musculus</name>
    <name type="common">Mouse</name>
    <dbReference type="NCBI Taxonomy" id="10090"/>
    <lineage>
        <taxon>Eukaryota</taxon>
        <taxon>Metazoa</taxon>
        <taxon>Chordata</taxon>
        <taxon>Craniata</taxon>
        <taxon>Vertebrata</taxon>
        <taxon>Euteleostomi</taxon>
        <taxon>Mammalia</taxon>
        <taxon>Eutheria</taxon>
        <taxon>Euarchontoglires</taxon>
        <taxon>Glires</taxon>
        <taxon>Rodentia</taxon>
        <taxon>Myomorpha</taxon>
        <taxon>Muroidea</taxon>
        <taxon>Muridae</taxon>
        <taxon>Murinae</taxon>
        <taxon>Mus</taxon>
        <taxon>Mus</taxon>
    </lineage>
</organism>
<keyword id="KW-0152">Cholesterol biosynthesis</keyword>
<keyword id="KW-0153">Cholesterol metabolism</keyword>
<keyword id="KW-0256">Endoplasmic reticulum</keyword>
<keyword id="KW-0378">Hydrolase</keyword>
<keyword id="KW-0444">Lipid biosynthesis</keyword>
<keyword id="KW-0443">Lipid metabolism</keyword>
<keyword id="KW-0472">Membrane</keyword>
<keyword id="KW-0521">NADP</keyword>
<keyword id="KW-0560">Oxidoreductase</keyword>
<keyword id="KW-0597">Phosphoprotein</keyword>
<keyword id="KW-1185">Reference proteome</keyword>
<keyword id="KW-0752">Steroid biosynthesis</keyword>
<keyword id="KW-0753">Steroid metabolism</keyword>
<keyword id="KW-0756">Sterol biosynthesis</keyword>
<keyword id="KW-1207">Sterol metabolism</keyword>
<keyword id="KW-0812">Transmembrane</keyword>
<keyword id="KW-1133">Transmembrane helix</keyword>